<protein>
    <recommendedName>
        <fullName>Ovomucoid</fullName>
    </recommendedName>
</protein>
<reference key="1">
    <citation type="journal article" date="1990" name="J. Protein Chem.">
        <title>Amino acid sequences of ovomucoid third domain from 25 additional species of birds.</title>
        <authorList>
            <person name="Laskowski M. Jr."/>
            <person name="Apostol I."/>
            <person name="Ardelt W."/>
            <person name="Cook J."/>
            <person name="Giletto A."/>
            <person name="Kelly C.A."/>
            <person name="Lu W."/>
            <person name="Park S.J."/>
            <person name="Qasim M.A."/>
            <person name="Whatley H.E."/>
            <person name="Wieczorek A."/>
            <person name="Wynn R."/>
        </authorList>
    </citation>
    <scope>PROTEIN SEQUENCE</scope>
</reference>
<comment type="subcellular location">
    <subcellularLocation>
        <location>Secreted</location>
    </subcellularLocation>
</comment>
<comment type="domain">
    <text>Avian ovomucoid consists of three homologous, tandem Kazal family inhibitory domains.</text>
</comment>
<keyword id="KW-0903">Direct protein sequencing</keyword>
<keyword id="KW-1015">Disulfide bond</keyword>
<keyword id="KW-0325">Glycoprotein</keyword>
<keyword id="KW-0646">Protease inhibitor</keyword>
<keyword id="KW-0677">Repeat</keyword>
<keyword id="KW-0964">Secreted</keyword>
<keyword id="KW-0722">Serine protease inhibitor</keyword>
<organism>
    <name type="scientific">Aix galericulata</name>
    <name type="common">Mandarin duck</name>
    <dbReference type="NCBI Taxonomy" id="8832"/>
    <lineage>
        <taxon>Eukaryota</taxon>
        <taxon>Metazoa</taxon>
        <taxon>Chordata</taxon>
        <taxon>Craniata</taxon>
        <taxon>Vertebrata</taxon>
        <taxon>Euteleostomi</taxon>
        <taxon>Archelosauria</taxon>
        <taxon>Archosauria</taxon>
        <taxon>Dinosauria</taxon>
        <taxon>Saurischia</taxon>
        <taxon>Theropoda</taxon>
        <taxon>Coelurosauria</taxon>
        <taxon>Aves</taxon>
        <taxon>Neognathae</taxon>
        <taxon>Galloanserae</taxon>
        <taxon>Anseriformes</taxon>
        <taxon>Anatidae</taxon>
        <taxon>Anatinae</taxon>
        <taxon>Aix</taxon>
    </lineage>
</organism>
<name>IOVO_AIXGA</name>
<accession>P68144</accession>
<accession>P05576</accession>
<evidence type="ECO:0000255" key="1">
    <source>
        <dbReference type="PROSITE-ProRule" id="PRU00798"/>
    </source>
</evidence>
<dbReference type="PIR" id="D61492">
    <property type="entry name" value="D61492"/>
</dbReference>
<dbReference type="SMR" id="P68144"/>
<dbReference type="GO" id="GO:0005576">
    <property type="term" value="C:extracellular region"/>
    <property type="evidence" value="ECO:0007669"/>
    <property type="project" value="UniProtKB-SubCell"/>
</dbReference>
<dbReference type="GO" id="GO:0004867">
    <property type="term" value="F:serine-type endopeptidase inhibitor activity"/>
    <property type="evidence" value="ECO:0007669"/>
    <property type="project" value="UniProtKB-KW"/>
</dbReference>
<dbReference type="CDD" id="cd00104">
    <property type="entry name" value="KAZAL_FS"/>
    <property type="match status" value="1"/>
</dbReference>
<dbReference type="FunFam" id="3.30.60.30:FF:000037">
    <property type="entry name" value="Ovomucoid"/>
    <property type="match status" value="1"/>
</dbReference>
<dbReference type="Gene3D" id="3.30.60.30">
    <property type="match status" value="1"/>
</dbReference>
<dbReference type="InterPro" id="IPR051597">
    <property type="entry name" value="Bifunctional_prot_inhibitor"/>
</dbReference>
<dbReference type="InterPro" id="IPR002350">
    <property type="entry name" value="Kazal_dom"/>
</dbReference>
<dbReference type="InterPro" id="IPR036058">
    <property type="entry name" value="Kazal_dom_sf"/>
</dbReference>
<dbReference type="InterPro" id="IPR001239">
    <property type="entry name" value="Prot_inh_Kazal-m"/>
</dbReference>
<dbReference type="PANTHER" id="PTHR47729:SF1">
    <property type="entry name" value="OVOMUCOID-LIKE-RELATED"/>
    <property type="match status" value="1"/>
</dbReference>
<dbReference type="PANTHER" id="PTHR47729">
    <property type="entry name" value="SERINE PEPTIDASE INHIBITOR, KAZAL TYPE 2, TANDEM DUPLICATE 1-RELATED"/>
    <property type="match status" value="1"/>
</dbReference>
<dbReference type="Pfam" id="PF00050">
    <property type="entry name" value="Kazal_1"/>
    <property type="match status" value="1"/>
</dbReference>
<dbReference type="PRINTS" id="PR00290">
    <property type="entry name" value="KAZALINHBTR"/>
</dbReference>
<dbReference type="SMART" id="SM00280">
    <property type="entry name" value="KAZAL"/>
    <property type="match status" value="1"/>
</dbReference>
<dbReference type="SUPFAM" id="SSF100895">
    <property type="entry name" value="Kazal-type serine protease inhibitors"/>
    <property type="match status" value="1"/>
</dbReference>
<dbReference type="PROSITE" id="PS00282">
    <property type="entry name" value="KAZAL_1"/>
    <property type="match status" value="1"/>
</dbReference>
<dbReference type="PROSITE" id="PS51465">
    <property type="entry name" value="KAZAL_2"/>
    <property type="match status" value="1"/>
</dbReference>
<sequence length="54" mass="5758">VATVDCSGYPKPACTMEYMPLCGSDNKTYGNKCNFCNAVVDSNGTLTLSHFGEC</sequence>
<feature type="chain" id="PRO_0000073050" description="Ovomucoid">
    <location>
        <begin position="1" status="less than"/>
        <end position="54" status="greater than"/>
    </location>
</feature>
<feature type="domain" description="Kazal-like" evidence="1">
    <location>
        <begin position="4"/>
        <end position="54"/>
    </location>
</feature>
<feature type="site" description="Reactive bond 3">
    <location>
        <begin position="16"/>
        <end position="17"/>
    </location>
</feature>
<feature type="glycosylation site" description="N-linked (GlcNAc...) asparagine">
    <location>
        <position position="43"/>
    </location>
</feature>
<feature type="disulfide bond">
    <location>
        <begin position="6"/>
        <end position="36"/>
    </location>
</feature>
<feature type="disulfide bond">
    <location>
        <begin position="14"/>
        <end position="33"/>
    </location>
</feature>
<feature type="disulfide bond">
    <location>
        <begin position="22"/>
        <end position="54"/>
    </location>
</feature>
<feature type="non-terminal residue">
    <location>
        <position position="1"/>
    </location>
</feature>
<feature type="non-terminal residue">
    <location>
        <position position="54"/>
    </location>
</feature>
<proteinExistence type="evidence at protein level"/>